<dbReference type="EC" id="2.3.1.181" evidence="1"/>
<dbReference type="EMBL" id="CP000482">
    <property type="protein sequence ID" value="ABK98657.1"/>
    <property type="molecule type" value="Genomic_DNA"/>
</dbReference>
<dbReference type="RefSeq" id="WP_011734961.1">
    <property type="nucleotide sequence ID" value="NC_008609.1"/>
</dbReference>
<dbReference type="SMR" id="A1AMT7"/>
<dbReference type="STRING" id="338966.Ppro_1031"/>
<dbReference type="KEGG" id="ppd:Ppro_1031"/>
<dbReference type="eggNOG" id="COG0321">
    <property type="taxonomic scope" value="Bacteria"/>
</dbReference>
<dbReference type="HOGENOM" id="CLU_035168_1_3_7"/>
<dbReference type="OrthoDB" id="9787061at2"/>
<dbReference type="UniPathway" id="UPA00538">
    <property type="reaction ID" value="UER00592"/>
</dbReference>
<dbReference type="Proteomes" id="UP000006732">
    <property type="component" value="Chromosome"/>
</dbReference>
<dbReference type="GO" id="GO:0005737">
    <property type="term" value="C:cytoplasm"/>
    <property type="evidence" value="ECO:0007669"/>
    <property type="project" value="UniProtKB-SubCell"/>
</dbReference>
<dbReference type="GO" id="GO:0033819">
    <property type="term" value="F:lipoyl(octanoyl) transferase activity"/>
    <property type="evidence" value="ECO:0007669"/>
    <property type="project" value="UniProtKB-EC"/>
</dbReference>
<dbReference type="GO" id="GO:0036211">
    <property type="term" value="P:protein modification process"/>
    <property type="evidence" value="ECO:0007669"/>
    <property type="project" value="InterPro"/>
</dbReference>
<dbReference type="CDD" id="cd16444">
    <property type="entry name" value="LipB"/>
    <property type="match status" value="1"/>
</dbReference>
<dbReference type="Gene3D" id="3.30.930.10">
    <property type="entry name" value="Bira Bifunctional Protein, Domain 2"/>
    <property type="match status" value="1"/>
</dbReference>
<dbReference type="HAMAP" id="MF_00013">
    <property type="entry name" value="LipB"/>
    <property type="match status" value="1"/>
</dbReference>
<dbReference type="InterPro" id="IPR045864">
    <property type="entry name" value="aa-tRNA-synth_II/BPL/LPL"/>
</dbReference>
<dbReference type="InterPro" id="IPR004143">
    <property type="entry name" value="BPL_LPL_catalytic"/>
</dbReference>
<dbReference type="InterPro" id="IPR000544">
    <property type="entry name" value="Octanoyltransferase"/>
</dbReference>
<dbReference type="InterPro" id="IPR020605">
    <property type="entry name" value="Octanoyltransferase_CS"/>
</dbReference>
<dbReference type="NCBIfam" id="TIGR00214">
    <property type="entry name" value="lipB"/>
    <property type="match status" value="1"/>
</dbReference>
<dbReference type="NCBIfam" id="NF010925">
    <property type="entry name" value="PRK14345.1"/>
    <property type="match status" value="1"/>
</dbReference>
<dbReference type="PANTHER" id="PTHR10993:SF7">
    <property type="entry name" value="LIPOYLTRANSFERASE 2, MITOCHONDRIAL-RELATED"/>
    <property type="match status" value="1"/>
</dbReference>
<dbReference type="PANTHER" id="PTHR10993">
    <property type="entry name" value="OCTANOYLTRANSFERASE"/>
    <property type="match status" value="1"/>
</dbReference>
<dbReference type="Pfam" id="PF21948">
    <property type="entry name" value="LplA-B_cat"/>
    <property type="match status" value="1"/>
</dbReference>
<dbReference type="PIRSF" id="PIRSF016262">
    <property type="entry name" value="LPLase"/>
    <property type="match status" value="1"/>
</dbReference>
<dbReference type="SUPFAM" id="SSF55681">
    <property type="entry name" value="Class II aaRS and biotin synthetases"/>
    <property type="match status" value="1"/>
</dbReference>
<dbReference type="PROSITE" id="PS51733">
    <property type="entry name" value="BPL_LPL_CATALYTIC"/>
    <property type="match status" value="1"/>
</dbReference>
<dbReference type="PROSITE" id="PS01313">
    <property type="entry name" value="LIPB"/>
    <property type="match status" value="1"/>
</dbReference>
<keyword id="KW-0012">Acyltransferase</keyword>
<keyword id="KW-0963">Cytoplasm</keyword>
<keyword id="KW-1185">Reference proteome</keyword>
<keyword id="KW-0808">Transferase</keyword>
<gene>
    <name evidence="1" type="primary">lipB</name>
    <name type="ordered locus">Ppro_1031</name>
</gene>
<comment type="function">
    <text evidence="1">Catalyzes the transfer of endogenously produced octanoic acid from octanoyl-acyl-carrier-protein onto the lipoyl domains of lipoate-dependent enzymes. Lipoyl-ACP can also act as a substrate although octanoyl-ACP is likely to be the physiological substrate.</text>
</comment>
<comment type="catalytic activity">
    <reaction evidence="1">
        <text>octanoyl-[ACP] + L-lysyl-[protein] = N(6)-octanoyl-L-lysyl-[protein] + holo-[ACP] + H(+)</text>
        <dbReference type="Rhea" id="RHEA:17665"/>
        <dbReference type="Rhea" id="RHEA-COMP:9636"/>
        <dbReference type="Rhea" id="RHEA-COMP:9685"/>
        <dbReference type="Rhea" id="RHEA-COMP:9752"/>
        <dbReference type="Rhea" id="RHEA-COMP:9928"/>
        <dbReference type="ChEBI" id="CHEBI:15378"/>
        <dbReference type="ChEBI" id="CHEBI:29969"/>
        <dbReference type="ChEBI" id="CHEBI:64479"/>
        <dbReference type="ChEBI" id="CHEBI:78463"/>
        <dbReference type="ChEBI" id="CHEBI:78809"/>
        <dbReference type="EC" id="2.3.1.181"/>
    </reaction>
</comment>
<comment type="pathway">
    <text evidence="1">Protein modification; protein lipoylation via endogenous pathway; protein N(6)-(lipoyl)lysine from octanoyl-[acyl-carrier-protein]: step 1/2.</text>
</comment>
<comment type="subcellular location">
    <subcellularLocation>
        <location evidence="1">Cytoplasm</location>
    </subcellularLocation>
</comment>
<comment type="miscellaneous">
    <text evidence="1">In the reaction, the free carboxyl group of octanoic acid is attached via an amide linkage to the epsilon-amino group of a specific lysine residue of lipoyl domains of lipoate-dependent enzymes.</text>
</comment>
<comment type="similarity">
    <text evidence="1">Belongs to the LipB family.</text>
</comment>
<name>LIPB_PELPD</name>
<sequence length="209" mass="22795">MILNDLGVVDYAAAFSLQERIADGVYRNATPETLLLLEHHPVYTIGRAGCEENILDHSIQAIRISRGGDVTFHGPGQLVGYPLINLRPRGCDLRHYLRFLEELLISVVADFGVSAFRVPGKTGVWTDQGKLAAIGVGVRHWVTMHGFAMNVNNDLSSFERINPCGIATCPIASLERLCGCPIAMDEVKSRVAGRFQGLLDEWLPAAGAL</sequence>
<proteinExistence type="inferred from homology"/>
<feature type="chain" id="PRO_1000001113" description="Octanoyltransferase">
    <location>
        <begin position="1"/>
        <end position="209"/>
    </location>
</feature>
<feature type="domain" description="BPL/LPL catalytic" evidence="2">
    <location>
        <begin position="28"/>
        <end position="203"/>
    </location>
</feature>
<feature type="active site" description="Acyl-thioester intermediate" evidence="1">
    <location>
        <position position="164"/>
    </location>
</feature>
<feature type="binding site" evidence="1">
    <location>
        <begin position="66"/>
        <end position="73"/>
    </location>
    <ligand>
        <name>substrate</name>
    </ligand>
</feature>
<feature type="binding site" evidence="1">
    <location>
        <begin position="133"/>
        <end position="135"/>
    </location>
    <ligand>
        <name>substrate</name>
    </ligand>
</feature>
<feature type="binding site" evidence="1">
    <location>
        <begin position="146"/>
        <end position="148"/>
    </location>
    <ligand>
        <name>substrate</name>
    </ligand>
</feature>
<feature type="site" description="Lowers pKa of active site Cys" evidence="1">
    <location>
        <position position="130"/>
    </location>
</feature>
<accession>A1AMT7</accession>
<protein>
    <recommendedName>
        <fullName evidence="1">Octanoyltransferase</fullName>
        <ecNumber evidence="1">2.3.1.181</ecNumber>
    </recommendedName>
    <alternativeName>
        <fullName evidence="1">Lipoate-protein ligase B</fullName>
    </alternativeName>
    <alternativeName>
        <fullName evidence="1">Lipoyl/octanoyl transferase</fullName>
    </alternativeName>
    <alternativeName>
        <fullName evidence="1">Octanoyl-[acyl-carrier-protein]-protein N-octanoyltransferase</fullName>
    </alternativeName>
</protein>
<reference key="1">
    <citation type="submission" date="2006-10" db="EMBL/GenBank/DDBJ databases">
        <title>Complete sequence of chromosome of Pelobacter propionicus DSM 2379.</title>
        <authorList>
            <consortium name="US DOE Joint Genome Institute"/>
            <person name="Copeland A."/>
            <person name="Lucas S."/>
            <person name="Lapidus A."/>
            <person name="Barry K."/>
            <person name="Detter J.C."/>
            <person name="Glavina del Rio T."/>
            <person name="Hammon N."/>
            <person name="Israni S."/>
            <person name="Dalin E."/>
            <person name="Tice H."/>
            <person name="Pitluck S."/>
            <person name="Saunders E."/>
            <person name="Brettin T."/>
            <person name="Bruce D."/>
            <person name="Han C."/>
            <person name="Tapia R."/>
            <person name="Schmutz J."/>
            <person name="Larimer F."/>
            <person name="Land M."/>
            <person name="Hauser L."/>
            <person name="Kyrpides N."/>
            <person name="Kim E."/>
            <person name="Lovley D."/>
            <person name="Richardson P."/>
        </authorList>
    </citation>
    <scope>NUCLEOTIDE SEQUENCE [LARGE SCALE GENOMIC DNA]</scope>
    <source>
        <strain>DSM 2379 / NBRC 103807 / OttBd1</strain>
    </source>
</reference>
<evidence type="ECO:0000255" key="1">
    <source>
        <dbReference type="HAMAP-Rule" id="MF_00013"/>
    </source>
</evidence>
<evidence type="ECO:0000255" key="2">
    <source>
        <dbReference type="PROSITE-ProRule" id="PRU01067"/>
    </source>
</evidence>
<organism>
    <name type="scientific">Pelobacter propionicus (strain DSM 2379 / NBRC 103807 / OttBd1)</name>
    <dbReference type="NCBI Taxonomy" id="338966"/>
    <lineage>
        <taxon>Bacteria</taxon>
        <taxon>Pseudomonadati</taxon>
        <taxon>Thermodesulfobacteriota</taxon>
        <taxon>Desulfuromonadia</taxon>
        <taxon>Desulfuromonadales</taxon>
        <taxon>Desulfuromonadaceae</taxon>
        <taxon>Pelobacter</taxon>
    </lineage>
</organism>